<gene>
    <name evidence="1" type="primary">fabA</name>
    <name type="ordered locus">SBO_2277</name>
</gene>
<protein>
    <recommendedName>
        <fullName evidence="1">3-hydroxydecanoyl-[acyl-carrier-protein] dehydratase</fullName>
        <ecNumber evidence="1">4.2.1.59</ecNumber>
    </recommendedName>
    <alternativeName>
        <fullName evidence="1">3-hydroxyacyl-[acyl-carrier-protein] dehydratase FabA</fullName>
    </alternativeName>
    <alternativeName>
        <fullName evidence="1">Beta-hydroxydecanoyl thioester dehydrase</fullName>
    </alternativeName>
    <alternativeName>
        <fullName evidence="1">Trans-2-decenoyl-[acyl-carrier-protein] isomerase</fullName>
        <ecNumber evidence="1">5.3.3.14</ecNumber>
    </alternativeName>
</protein>
<dbReference type="EC" id="4.2.1.59" evidence="1"/>
<dbReference type="EC" id="5.3.3.14" evidence="1"/>
<dbReference type="EMBL" id="CP000036">
    <property type="protein sequence ID" value="ABB66841.1"/>
    <property type="molecule type" value="Genomic_DNA"/>
</dbReference>
<dbReference type="RefSeq" id="WP_000227927.1">
    <property type="nucleotide sequence ID" value="NC_007613.1"/>
</dbReference>
<dbReference type="SMR" id="Q31YL7"/>
<dbReference type="GeneID" id="93776460"/>
<dbReference type="KEGG" id="sbo:SBO_2277"/>
<dbReference type="HOGENOM" id="CLU_097925_0_0_6"/>
<dbReference type="UniPathway" id="UPA00094"/>
<dbReference type="Proteomes" id="UP000007067">
    <property type="component" value="Chromosome"/>
</dbReference>
<dbReference type="GO" id="GO:0005737">
    <property type="term" value="C:cytoplasm"/>
    <property type="evidence" value="ECO:0007669"/>
    <property type="project" value="UniProtKB-SubCell"/>
</dbReference>
<dbReference type="GO" id="GO:0019171">
    <property type="term" value="F:(3R)-hydroxyacyl-[acyl-carrier-protein] dehydratase activity"/>
    <property type="evidence" value="ECO:0007669"/>
    <property type="project" value="UniProtKB-UniRule"/>
</dbReference>
<dbReference type="GO" id="GO:0034017">
    <property type="term" value="F:trans-2-decenoyl-acyl-carrier-protein isomerase activity"/>
    <property type="evidence" value="ECO:0007669"/>
    <property type="project" value="UniProtKB-UniRule"/>
</dbReference>
<dbReference type="GO" id="GO:0006636">
    <property type="term" value="P:unsaturated fatty acid biosynthetic process"/>
    <property type="evidence" value="ECO:0007669"/>
    <property type="project" value="UniProtKB-UniRule"/>
</dbReference>
<dbReference type="CDD" id="cd01287">
    <property type="entry name" value="FabA"/>
    <property type="match status" value="1"/>
</dbReference>
<dbReference type="FunFam" id="3.10.129.10:FF:000003">
    <property type="entry name" value="3-hydroxydecanoyl-[acyl-carrier-protein] dehydratase"/>
    <property type="match status" value="1"/>
</dbReference>
<dbReference type="Gene3D" id="3.10.129.10">
    <property type="entry name" value="Hotdog Thioesterase"/>
    <property type="match status" value="1"/>
</dbReference>
<dbReference type="HAMAP" id="MF_00405">
    <property type="entry name" value="FabA"/>
    <property type="match status" value="1"/>
</dbReference>
<dbReference type="InterPro" id="IPR010083">
    <property type="entry name" value="FabA"/>
</dbReference>
<dbReference type="InterPro" id="IPR013114">
    <property type="entry name" value="FabA_FabZ"/>
</dbReference>
<dbReference type="InterPro" id="IPR029069">
    <property type="entry name" value="HotDog_dom_sf"/>
</dbReference>
<dbReference type="NCBIfam" id="TIGR01749">
    <property type="entry name" value="fabA"/>
    <property type="match status" value="1"/>
</dbReference>
<dbReference type="NCBIfam" id="NF003509">
    <property type="entry name" value="PRK05174.1"/>
    <property type="match status" value="1"/>
</dbReference>
<dbReference type="PANTHER" id="PTHR30272">
    <property type="entry name" value="3-HYDROXYACYL-[ACYL-CARRIER-PROTEIN] DEHYDRATASE"/>
    <property type="match status" value="1"/>
</dbReference>
<dbReference type="PANTHER" id="PTHR30272:SF8">
    <property type="entry name" value="3-HYDROXYDECANOYL-[ACYL-CARRIER-PROTEIN] DEHYDRATASE"/>
    <property type="match status" value="1"/>
</dbReference>
<dbReference type="Pfam" id="PF07977">
    <property type="entry name" value="FabA"/>
    <property type="match status" value="1"/>
</dbReference>
<dbReference type="SUPFAM" id="SSF54637">
    <property type="entry name" value="Thioesterase/thiol ester dehydrase-isomerase"/>
    <property type="match status" value="1"/>
</dbReference>
<accession>Q31YL7</accession>
<comment type="function">
    <text evidence="1">Necessary for the introduction of cis unsaturation into fatty acids. Catalyzes the dehydration of (3R)-3-hydroxydecanoyl-ACP to E-(2)-decenoyl-ACP and then its isomerization to Z-(3)-decenoyl-ACP. Can catalyze the dehydratase reaction for beta-hydroxyacyl-ACPs with saturated chain lengths up to 16:0, being most active on intermediate chain length.</text>
</comment>
<comment type="catalytic activity">
    <reaction evidence="1">
        <text>a (3R)-hydroxyacyl-[ACP] = a (2E)-enoyl-[ACP] + H2O</text>
        <dbReference type="Rhea" id="RHEA:13097"/>
        <dbReference type="Rhea" id="RHEA-COMP:9925"/>
        <dbReference type="Rhea" id="RHEA-COMP:9945"/>
        <dbReference type="ChEBI" id="CHEBI:15377"/>
        <dbReference type="ChEBI" id="CHEBI:78784"/>
        <dbReference type="ChEBI" id="CHEBI:78827"/>
        <dbReference type="EC" id="4.2.1.59"/>
    </reaction>
</comment>
<comment type="catalytic activity">
    <reaction evidence="1">
        <text>(3R)-hydroxydecanoyl-[ACP] = (2E)-decenoyl-[ACP] + H2O</text>
        <dbReference type="Rhea" id="RHEA:41860"/>
        <dbReference type="Rhea" id="RHEA-COMP:9638"/>
        <dbReference type="Rhea" id="RHEA-COMP:9639"/>
        <dbReference type="ChEBI" id="CHEBI:15377"/>
        <dbReference type="ChEBI" id="CHEBI:78466"/>
        <dbReference type="ChEBI" id="CHEBI:78467"/>
    </reaction>
</comment>
<comment type="catalytic activity">
    <reaction evidence="1">
        <text>(2E)-decenoyl-[ACP] = (3Z)-decenoyl-[ACP]</text>
        <dbReference type="Rhea" id="RHEA:23568"/>
        <dbReference type="Rhea" id="RHEA-COMP:9639"/>
        <dbReference type="Rhea" id="RHEA-COMP:9927"/>
        <dbReference type="ChEBI" id="CHEBI:78467"/>
        <dbReference type="ChEBI" id="CHEBI:78798"/>
        <dbReference type="EC" id="5.3.3.14"/>
    </reaction>
</comment>
<comment type="pathway">
    <text evidence="1">Lipid metabolism; fatty acid biosynthesis.</text>
</comment>
<comment type="subunit">
    <text evidence="1">Homodimer.</text>
</comment>
<comment type="subcellular location">
    <subcellularLocation>
        <location evidence="1">Cytoplasm</location>
    </subcellularLocation>
</comment>
<comment type="similarity">
    <text evidence="1">Belongs to the thioester dehydratase family. FabA subfamily.</text>
</comment>
<keyword id="KW-0963">Cytoplasm</keyword>
<keyword id="KW-0275">Fatty acid biosynthesis</keyword>
<keyword id="KW-0276">Fatty acid metabolism</keyword>
<keyword id="KW-0413">Isomerase</keyword>
<keyword id="KW-0444">Lipid biosynthesis</keyword>
<keyword id="KW-0443">Lipid metabolism</keyword>
<keyword id="KW-0456">Lyase</keyword>
<organism>
    <name type="scientific">Shigella boydii serotype 4 (strain Sb227)</name>
    <dbReference type="NCBI Taxonomy" id="300268"/>
    <lineage>
        <taxon>Bacteria</taxon>
        <taxon>Pseudomonadati</taxon>
        <taxon>Pseudomonadota</taxon>
        <taxon>Gammaproteobacteria</taxon>
        <taxon>Enterobacterales</taxon>
        <taxon>Enterobacteriaceae</taxon>
        <taxon>Shigella</taxon>
    </lineage>
</organism>
<name>FABA_SHIBS</name>
<reference key="1">
    <citation type="journal article" date="2005" name="Nucleic Acids Res.">
        <title>Genome dynamics and diversity of Shigella species, the etiologic agents of bacillary dysentery.</title>
        <authorList>
            <person name="Yang F."/>
            <person name="Yang J."/>
            <person name="Zhang X."/>
            <person name="Chen L."/>
            <person name="Jiang Y."/>
            <person name="Yan Y."/>
            <person name="Tang X."/>
            <person name="Wang J."/>
            <person name="Xiong Z."/>
            <person name="Dong J."/>
            <person name="Xue Y."/>
            <person name="Zhu Y."/>
            <person name="Xu X."/>
            <person name="Sun L."/>
            <person name="Chen S."/>
            <person name="Nie H."/>
            <person name="Peng J."/>
            <person name="Xu J."/>
            <person name="Wang Y."/>
            <person name="Yuan Z."/>
            <person name="Wen Y."/>
            <person name="Yao Z."/>
            <person name="Shen Y."/>
            <person name="Qiang B."/>
            <person name="Hou Y."/>
            <person name="Yu J."/>
            <person name="Jin Q."/>
        </authorList>
    </citation>
    <scope>NUCLEOTIDE SEQUENCE [LARGE SCALE GENOMIC DNA]</scope>
    <source>
        <strain>Sb227</strain>
    </source>
</reference>
<evidence type="ECO:0000255" key="1">
    <source>
        <dbReference type="HAMAP-Rule" id="MF_00405"/>
    </source>
</evidence>
<sequence>MVDKRESYTKEDLLASGRGELFGAKGPQLPAPNMLMMDRVVKMTETGGNFDKGYVEAELDINPDLWFFGCHFIGDPVMPGCLGLDAMWQLVGFYLGWLGGEGKGRALGVGEVKFTGQVLPTAKKVTYRIHFKRIVNRRLIMGLADGEVLVDGRLIYTASDLKVGLFQDTSAF</sequence>
<feature type="chain" id="PRO_0000267754" description="3-hydroxydecanoyl-[acyl-carrier-protein] dehydratase">
    <location>
        <begin position="1"/>
        <end position="172"/>
    </location>
</feature>
<feature type="active site" evidence="1">
    <location>
        <position position="71"/>
    </location>
</feature>
<proteinExistence type="inferred from homology"/>